<protein>
    <recommendedName>
        <fullName>S-locus-specific glycoprotein</fullName>
    </recommendedName>
</protein>
<accession>P22551</accession>
<keyword id="KW-1015">Disulfide bond</keyword>
<keyword id="KW-0325">Glycoprotein</keyword>
<keyword id="KW-0713">Self-incompatibility</keyword>
<keyword id="KW-0732">Signal</keyword>
<proteinExistence type="evidence at transcript level"/>
<reference key="1">
    <citation type="journal article" date="1990" name="Plant Mol. Biol.">
        <title>Genomic sequence of a Brassica S locus-related gene.</title>
        <authorList>
            <person name="Trick M."/>
        </authorList>
    </citation>
    <scope>NUCLEOTIDE SEQUENCE [GENOMIC DNA]</scope>
    <scope>POLYMORPHISM</scope>
</reference>
<evidence type="ECO:0000250" key="1"/>
<evidence type="ECO:0000255" key="2"/>
<evidence type="ECO:0000255" key="3">
    <source>
        <dbReference type="PROSITE-ProRule" id="PRU00038"/>
    </source>
</evidence>
<evidence type="ECO:0000255" key="4">
    <source>
        <dbReference type="PROSITE-ProRule" id="PRU00315"/>
    </source>
</evidence>
<evidence type="ECO:0000305" key="5"/>
<evidence type="ECO:0000305" key="6">
    <source>
    </source>
</evidence>
<name>SLSG0_BRAOA</name>
<gene>
    <name type="primary">SLSG</name>
</gene>
<sequence length="444" mass="50358">MRGVIPNYHHSYTLFFFVILVLFPHVFSTNTLSPNEALTISSNKTLVSPGDVFELGFFKTTTRNSPDGTDRWYLGIWYKTTSGHRTYVWVANRDNALHNSMGTLKISHASLVLLDHSNTPVWSTNFTGVAHLPVTAELLANGNFVLRDSKTNDLDRFMWQSFDYPVDTLLPEMKLGRNLIGSENEKILTSWKSPTDPSSGDFSFILETEGFLHEFYLLKNEFKVYRTGPWNGVRFNGIPKMQNWSYIDNSFIDNNEEVAYSFQVNNNHNIHTRFRMSSTGYLQVITWTKTVPQRNMFWSFPEDTCDLYKVCGPYAYCDMHTSPTCNCIKGFVPKNAGRWDLRDMSGGCVRSSKLSCGEGDGFLRMSQMKLPETSEAVVDKRIGLKECREKCVRDCNCTGYANMDIMNGGSGCVMWTGELDDMRKYNAGGQDLYVKVAAASLVPS</sequence>
<organism>
    <name type="scientific">Brassica oleracea var. alboglabra</name>
    <name type="common">Chinese kale</name>
    <name type="synonym">Brassica alboglabra</name>
    <dbReference type="NCBI Taxonomy" id="3714"/>
    <lineage>
        <taxon>Eukaryota</taxon>
        <taxon>Viridiplantae</taxon>
        <taxon>Streptophyta</taxon>
        <taxon>Embryophyta</taxon>
        <taxon>Tracheophyta</taxon>
        <taxon>Spermatophyta</taxon>
        <taxon>Magnoliopsida</taxon>
        <taxon>eudicotyledons</taxon>
        <taxon>Gunneridae</taxon>
        <taxon>Pentapetalae</taxon>
        <taxon>rosids</taxon>
        <taxon>malvids</taxon>
        <taxon>Brassicales</taxon>
        <taxon>Brassicaceae</taxon>
        <taxon>Brassiceae</taxon>
        <taxon>Brassica</taxon>
    </lineage>
</organism>
<comment type="function">
    <text>Involved in sporophytic self-incompatibility system (the inability of flowering plants to achieve self-fertilization).</text>
</comment>
<comment type="tissue specificity">
    <text>Stigma.</text>
</comment>
<comment type="polymorphism">
    <text evidence="6">There are a total of 50 different S alleles in B.oleracea.</text>
</comment>
<dbReference type="EMBL" id="X52089">
    <property type="protein sequence ID" value="CAA36307.1"/>
    <property type="molecule type" value="Genomic_DNA"/>
</dbReference>
<dbReference type="PIR" id="S11880">
    <property type="entry name" value="S11880"/>
</dbReference>
<dbReference type="SMR" id="P22551"/>
<dbReference type="GlyCosmos" id="P22551">
    <property type="glycosylation" value="4 sites, No reported glycans"/>
</dbReference>
<dbReference type="GO" id="GO:0060320">
    <property type="term" value="P:rejection of self pollen"/>
    <property type="evidence" value="ECO:0007669"/>
    <property type="project" value="UniProtKB-KW"/>
</dbReference>
<dbReference type="CDD" id="cd00028">
    <property type="entry name" value="B_lectin"/>
    <property type="match status" value="1"/>
</dbReference>
<dbReference type="CDD" id="cd01098">
    <property type="entry name" value="PAN_AP_plant"/>
    <property type="match status" value="1"/>
</dbReference>
<dbReference type="Gene3D" id="2.90.10.10">
    <property type="entry name" value="Bulb-type lectin domain"/>
    <property type="match status" value="1"/>
</dbReference>
<dbReference type="Gene3D" id="3.50.4.10">
    <property type="entry name" value="Hepatocyte Growth Factor"/>
    <property type="match status" value="1"/>
</dbReference>
<dbReference type="InterPro" id="IPR001480">
    <property type="entry name" value="Bulb-type_lectin_dom"/>
</dbReference>
<dbReference type="InterPro" id="IPR036426">
    <property type="entry name" value="Bulb-type_lectin_dom_sf"/>
</dbReference>
<dbReference type="InterPro" id="IPR003609">
    <property type="entry name" value="Pan_app"/>
</dbReference>
<dbReference type="InterPro" id="IPR000858">
    <property type="entry name" value="S_locus_glycoprot_dom"/>
</dbReference>
<dbReference type="InterPro" id="IPR035446">
    <property type="entry name" value="SLSG/EP1"/>
</dbReference>
<dbReference type="PANTHER" id="PTHR32444">
    <property type="entry name" value="BULB-TYPE LECTIN DOMAIN-CONTAINING PROTEIN"/>
    <property type="match status" value="1"/>
</dbReference>
<dbReference type="PANTHER" id="PTHR32444:SF89">
    <property type="entry name" value="S GLYCOPROTEIN"/>
    <property type="match status" value="1"/>
</dbReference>
<dbReference type="Pfam" id="PF01453">
    <property type="entry name" value="B_lectin"/>
    <property type="match status" value="1"/>
</dbReference>
<dbReference type="Pfam" id="PF08276">
    <property type="entry name" value="PAN_2"/>
    <property type="match status" value="1"/>
</dbReference>
<dbReference type="Pfam" id="PF00954">
    <property type="entry name" value="S_locus_glycop"/>
    <property type="match status" value="1"/>
</dbReference>
<dbReference type="PIRSF" id="PIRSF002686">
    <property type="entry name" value="SLG"/>
    <property type="match status" value="1"/>
</dbReference>
<dbReference type="SMART" id="SM00108">
    <property type="entry name" value="B_lectin"/>
    <property type="match status" value="1"/>
</dbReference>
<dbReference type="SMART" id="SM00473">
    <property type="entry name" value="PAN_AP"/>
    <property type="match status" value="1"/>
</dbReference>
<dbReference type="SUPFAM" id="SSF51110">
    <property type="entry name" value="alpha-D-mannose-specific plant lectins"/>
    <property type="match status" value="1"/>
</dbReference>
<dbReference type="PROSITE" id="PS50927">
    <property type="entry name" value="BULB_LECTIN"/>
    <property type="match status" value="1"/>
</dbReference>
<dbReference type="PROSITE" id="PS50948">
    <property type="entry name" value="PAN"/>
    <property type="match status" value="1"/>
</dbReference>
<feature type="signal peptide" evidence="5">
    <location>
        <begin position="1"/>
        <end position="28"/>
    </location>
</feature>
<feature type="chain" id="PRO_0000022361" description="S-locus-specific glycoprotein">
    <location>
        <begin position="29"/>
        <end position="444"/>
    </location>
</feature>
<feature type="domain" description="Bulb-type lectin" evidence="3">
    <location>
        <begin position="31"/>
        <end position="159"/>
    </location>
</feature>
<feature type="domain" description="PAN" evidence="4">
    <location>
        <begin position="356"/>
        <end position="437"/>
    </location>
</feature>
<feature type="glycosylation site" description="N-linked (GlcNAc...) asparagine" evidence="2">
    <location>
        <position position="43"/>
    </location>
</feature>
<feature type="glycosylation site" description="N-linked (GlcNAc...) asparagine" evidence="2">
    <location>
        <position position="125"/>
    </location>
</feature>
<feature type="glycosylation site" description="N-linked (GlcNAc...) asparagine" evidence="2">
    <location>
        <position position="243"/>
    </location>
</feature>
<feature type="glycosylation site" description="N-linked (GlcNAc...) asparagine" evidence="2">
    <location>
        <position position="396"/>
    </location>
</feature>
<feature type="disulfide bond" evidence="1">
    <location>
        <begin position="387"/>
        <end position="412"/>
    </location>
</feature>
<feature type="disulfide bond" evidence="1">
    <location>
        <begin position="395"/>
        <end position="397"/>
    </location>
</feature>